<reference key="1">
    <citation type="submission" date="2007-05" db="EMBL/GenBank/DDBJ databases">
        <title>Complete sequence of Thermosipho melanesiensis BI429.</title>
        <authorList>
            <consortium name="US DOE Joint Genome Institute"/>
            <person name="Copeland A."/>
            <person name="Lucas S."/>
            <person name="Lapidus A."/>
            <person name="Barry K."/>
            <person name="Glavina del Rio T."/>
            <person name="Dalin E."/>
            <person name="Tice H."/>
            <person name="Pitluck S."/>
            <person name="Chertkov O."/>
            <person name="Brettin T."/>
            <person name="Bruce D."/>
            <person name="Detter J.C."/>
            <person name="Han C."/>
            <person name="Schmutz J."/>
            <person name="Larimer F."/>
            <person name="Land M."/>
            <person name="Hauser L."/>
            <person name="Kyrpides N."/>
            <person name="Mikhailova N."/>
            <person name="Nelson K."/>
            <person name="Gogarten J.P."/>
            <person name="Noll K."/>
            <person name="Richardson P."/>
        </authorList>
    </citation>
    <scope>NUCLEOTIDE SEQUENCE [LARGE SCALE GENOMIC DNA]</scope>
    <source>
        <strain>DSM 12029 / CIP 104789 / BI429</strain>
    </source>
</reference>
<feature type="chain" id="PRO_1000118025" description="Hydroxylamine reductase">
    <location>
        <begin position="1"/>
        <end position="552"/>
    </location>
</feature>
<feature type="binding site" evidence="1">
    <location>
        <position position="3"/>
    </location>
    <ligand>
        <name>[4Fe-4S] cluster</name>
        <dbReference type="ChEBI" id="CHEBI:49883"/>
    </ligand>
</feature>
<feature type="binding site" evidence="1">
    <location>
        <position position="6"/>
    </location>
    <ligand>
        <name>[4Fe-4S] cluster</name>
        <dbReference type="ChEBI" id="CHEBI:49883"/>
    </ligand>
</feature>
<feature type="binding site" evidence="1">
    <location>
        <position position="15"/>
    </location>
    <ligand>
        <name>[4Fe-4S] cluster</name>
        <dbReference type="ChEBI" id="CHEBI:49883"/>
    </ligand>
</feature>
<feature type="binding site" evidence="1">
    <location>
        <position position="21"/>
    </location>
    <ligand>
        <name>[4Fe-4S] cluster</name>
        <dbReference type="ChEBI" id="CHEBI:49883"/>
    </ligand>
</feature>
<feature type="binding site" evidence="1">
    <location>
        <position position="247"/>
    </location>
    <ligand>
        <name>hybrid [4Fe-2O-2S] cluster</name>
        <dbReference type="ChEBI" id="CHEBI:60519"/>
    </ligand>
</feature>
<feature type="binding site" evidence="1">
    <location>
        <position position="271"/>
    </location>
    <ligand>
        <name>hybrid [4Fe-2O-2S] cluster</name>
        <dbReference type="ChEBI" id="CHEBI:60519"/>
    </ligand>
</feature>
<feature type="binding site" evidence="1">
    <location>
        <position position="315"/>
    </location>
    <ligand>
        <name>hybrid [4Fe-2O-2S] cluster</name>
        <dbReference type="ChEBI" id="CHEBI:60519"/>
    </ligand>
</feature>
<feature type="binding site" description="via persulfide group" evidence="1">
    <location>
        <position position="407"/>
    </location>
    <ligand>
        <name>hybrid [4Fe-2O-2S] cluster</name>
        <dbReference type="ChEBI" id="CHEBI:60519"/>
    </ligand>
</feature>
<feature type="binding site" evidence="1">
    <location>
        <position position="435"/>
    </location>
    <ligand>
        <name>hybrid [4Fe-2O-2S] cluster</name>
        <dbReference type="ChEBI" id="CHEBI:60519"/>
    </ligand>
</feature>
<feature type="binding site" evidence="1">
    <location>
        <position position="460"/>
    </location>
    <ligand>
        <name>hybrid [4Fe-2O-2S] cluster</name>
        <dbReference type="ChEBI" id="CHEBI:60519"/>
    </ligand>
</feature>
<feature type="binding site" evidence="1">
    <location>
        <position position="495"/>
    </location>
    <ligand>
        <name>hybrid [4Fe-2O-2S] cluster</name>
        <dbReference type="ChEBI" id="CHEBI:60519"/>
    </ligand>
</feature>
<feature type="binding site" evidence="1">
    <location>
        <position position="497"/>
    </location>
    <ligand>
        <name>hybrid [4Fe-2O-2S] cluster</name>
        <dbReference type="ChEBI" id="CHEBI:60519"/>
    </ligand>
</feature>
<feature type="modified residue" description="Cysteine persulfide" evidence="1">
    <location>
        <position position="407"/>
    </location>
</feature>
<comment type="function">
    <text evidence="1">Catalyzes the reduction of hydroxylamine to form NH(3) and H(2)O.</text>
</comment>
<comment type="catalytic activity">
    <reaction evidence="1">
        <text>A + NH4(+) + H2O = hydroxylamine + AH2 + H(+)</text>
        <dbReference type="Rhea" id="RHEA:22052"/>
        <dbReference type="ChEBI" id="CHEBI:13193"/>
        <dbReference type="ChEBI" id="CHEBI:15377"/>
        <dbReference type="ChEBI" id="CHEBI:15378"/>
        <dbReference type="ChEBI" id="CHEBI:15429"/>
        <dbReference type="ChEBI" id="CHEBI:17499"/>
        <dbReference type="ChEBI" id="CHEBI:28938"/>
        <dbReference type="EC" id="1.7.99.1"/>
    </reaction>
</comment>
<comment type="cofactor">
    <cofactor evidence="1">
        <name>[4Fe-4S] cluster</name>
        <dbReference type="ChEBI" id="CHEBI:49883"/>
    </cofactor>
    <text evidence="1">Binds 1 [4Fe-4S] cluster.</text>
</comment>
<comment type="cofactor">
    <cofactor evidence="1">
        <name>hybrid [4Fe-2O-2S] cluster</name>
        <dbReference type="ChEBI" id="CHEBI:60519"/>
    </cofactor>
    <text evidence="1">Binds 1 hybrid [4Fe-2O-2S] cluster.</text>
</comment>
<comment type="subcellular location">
    <subcellularLocation>
        <location evidence="1">Cytoplasm</location>
    </subcellularLocation>
</comment>
<comment type="similarity">
    <text evidence="1">Belongs to the HCP family.</text>
</comment>
<proteinExistence type="inferred from homology"/>
<keyword id="KW-0004">4Fe-4S</keyword>
<keyword id="KW-0963">Cytoplasm</keyword>
<keyword id="KW-0408">Iron</keyword>
<keyword id="KW-0411">Iron-sulfur</keyword>
<keyword id="KW-0479">Metal-binding</keyword>
<keyword id="KW-0560">Oxidoreductase</keyword>
<gene>
    <name evidence="1" type="primary">hcp</name>
    <name type="ordered locus">Tmel_0754</name>
</gene>
<name>HCP_THEM4</name>
<sequence>MFCYQCSEASKGVGCTTIGVCGKTPDVANLQDLLIWLTRGISYWALKAKEYGVKDDEVNLFVAEALFSTITNVNFSAKRMVEFIERAFELRERIKHRFLEAYAEKEGKTFDEKVPEAAEWHKKGGVDLYELKGMEVGVLFDKDEDIRSLKQLLIYGLKGIAAYTDHAYILKHTNDDILYFIQKGLVETLREDITVDELVSLVLEAGKVAVDAMALLDKANTTEFGNPEITEVYTGTYNTPAILVSGHDLLDLEELLKQTEGTGIMVYTHGEMLPAHAYPKLKKYKHLAGNFGSAWWKQSEEFEEFGGAILMTTNCLVPPKESYKDRVFTTGLVGFDKLTHIPNRTDGKPKDFSPVIKKALELGPIPERKGKKIVIGFAHDQVSRLLDKVIDAVKSGAIKKFVVMGGCDGRHKEREYYTEFAKKLPKDTVILTAGCAKYRYNHLDLGDIGGIPRVLDAGQCNDSYSLVVTALKLKEALGLDDINDLPIVYNIAWYEQKAIAVLLALLYLGVKGIRLGPVLPAFISPNVLKVLVDKFNIAPITTVEEDLKVLLS</sequence>
<organism>
    <name type="scientific">Thermosipho melanesiensis (strain DSM 12029 / CIP 104789 / BI429)</name>
    <dbReference type="NCBI Taxonomy" id="391009"/>
    <lineage>
        <taxon>Bacteria</taxon>
        <taxon>Thermotogati</taxon>
        <taxon>Thermotogota</taxon>
        <taxon>Thermotogae</taxon>
        <taxon>Thermotogales</taxon>
        <taxon>Fervidobacteriaceae</taxon>
        <taxon>Thermosipho</taxon>
    </lineage>
</organism>
<accession>A6LL16</accession>
<protein>
    <recommendedName>
        <fullName evidence="1">Hydroxylamine reductase</fullName>
        <ecNumber evidence="1">1.7.99.1</ecNumber>
    </recommendedName>
    <alternativeName>
        <fullName evidence="1">Hybrid-cluster protein</fullName>
        <shortName evidence="1">HCP</shortName>
    </alternativeName>
    <alternativeName>
        <fullName evidence="1">Prismane protein</fullName>
    </alternativeName>
</protein>
<evidence type="ECO:0000255" key="1">
    <source>
        <dbReference type="HAMAP-Rule" id="MF_00069"/>
    </source>
</evidence>
<dbReference type="EC" id="1.7.99.1" evidence="1"/>
<dbReference type="EMBL" id="CP000716">
    <property type="protein sequence ID" value="ABR30617.1"/>
    <property type="molecule type" value="Genomic_DNA"/>
</dbReference>
<dbReference type="RefSeq" id="WP_012056978.1">
    <property type="nucleotide sequence ID" value="NC_009616.1"/>
</dbReference>
<dbReference type="SMR" id="A6LL16"/>
<dbReference type="STRING" id="391009.Tmel_0754"/>
<dbReference type="KEGG" id="tme:Tmel_0754"/>
<dbReference type="eggNOG" id="COG1151">
    <property type="taxonomic scope" value="Bacteria"/>
</dbReference>
<dbReference type="HOGENOM" id="CLU_038344_2_0_0"/>
<dbReference type="OrthoDB" id="9761526at2"/>
<dbReference type="Proteomes" id="UP000001110">
    <property type="component" value="Chromosome"/>
</dbReference>
<dbReference type="GO" id="GO:0005737">
    <property type="term" value="C:cytoplasm"/>
    <property type="evidence" value="ECO:0007669"/>
    <property type="project" value="UniProtKB-SubCell"/>
</dbReference>
<dbReference type="GO" id="GO:0051539">
    <property type="term" value="F:4 iron, 4 sulfur cluster binding"/>
    <property type="evidence" value="ECO:0007669"/>
    <property type="project" value="UniProtKB-KW"/>
</dbReference>
<dbReference type="GO" id="GO:0050418">
    <property type="term" value="F:hydroxylamine reductase activity"/>
    <property type="evidence" value="ECO:0007669"/>
    <property type="project" value="UniProtKB-UniRule"/>
</dbReference>
<dbReference type="GO" id="GO:0046872">
    <property type="term" value="F:metal ion binding"/>
    <property type="evidence" value="ECO:0007669"/>
    <property type="project" value="UniProtKB-KW"/>
</dbReference>
<dbReference type="GO" id="GO:0004601">
    <property type="term" value="F:peroxidase activity"/>
    <property type="evidence" value="ECO:0007669"/>
    <property type="project" value="TreeGrafter"/>
</dbReference>
<dbReference type="GO" id="GO:0042542">
    <property type="term" value="P:response to hydrogen peroxide"/>
    <property type="evidence" value="ECO:0007669"/>
    <property type="project" value="TreeGrafter"/>
</dbReference>
<dbReference type="CDD" id="cd01914">
    <property type="entry name" value="HCP"/>
    <property type="match status" value="1"/>
</dbReference>
<dbReference type="FunFam" id="1.20.1270.20:FF:000001">
    <property type="entry name" value="Hydroxylamine reductase"/>
    <property type="match status" value="1"/>
</dbReference>
<dbReference type="FunFam" id="3.40.50.2030:FF:000001">
    <property type="entry name" value="Hydroxylamine reductase"/>
    <property type="match status" value="1"/>
</dbReference>
<dbReference type="FunFam" id="3.40.50.2030:FF:000002">
    <property type="entry name" value="Hydroxylamine reductase"/>
    <property type="match status" value="1"/>
</dbReference>
<dbReference type="Gene3D" id="1.20.1270.20">
    <property type="match status" value="2"/>
</dbReference>
<dbReference type="Gene3D" id="3.40.50.2030">
    <property type="match status" value="2"/>
</dbReference>
<dbReference type="HAMAP" id="MF_00069">
    <property type="entry name" value="Hydroxylam_reduct"/>
    <property type="match status" value="1"/>
</dbReference>
<dbReference type="InterPro" id="IPR004137">
    <property type="entry name" value="HCP/CODH"/>
</dbReference>
<dbReference type="InterPro" id="IPR010048">
    <property type="entry name" value="Hydroxylam_reduct"/>
</dbReference>
<dbReference type="InterPro" id="IPR016099">
    <property type="entry name" value="Prismane-like_a/b-sand"/>
</dbReference>
<dbReference type="InterPro" id="IPR011254">
    <property type="entry name" value="Prismane-like_sf"/>
</dbReference>
<dbReference type="InterPro" id="IPR016100">
    <property type="entry name" value="Prismane_a-bundle"/>
</dbReference>
<dbReference type="NCBIfam" id="TIGR01703">
    <property type="entry name" value="hybrid_clust"/>
    <property type="match status" value="1"/>
</dbReference>
<dbReference type="NCBIfam" id="NF003658">
    <property type="entry name" value="PRK05290.1"/>
    <property type="match status" value="1"/>
</dbReference>
<dbReference type="PANTHER" id="PTHR30109">
    <property type="entry name" value="HYDROXYLAMINE REDUCTASE"/>
    <property type="match status" value="1"/>
</dbReference>
<dbReference type="PANTHER" id="PTHR30109:SF0">
    <property type="entry name" value="HYDROXYLAMINE REDUCTASE"/>
    <property type="match status" value="1"/>
</dbReference>
<dbReference type="Pfam" id="PF03063">
    <property type="entry name" value="Prismane"/>
    <property type="match status" value="1"/>
</dbReference>
<dbReference type="PIRSF" id="PIRSF000076">
    <property type="entry name" value="HCP"/>
    <property type="match status" value="1"/>
</dbReference>
<dbReference type="SUPFAM" id="SSF56821">
    <property type="entry name" value="Prismane protein-like"/>
    <property type="match status" value="1"/>
</dbReference>